<reference key="1">
    <citation type="submission" date="2006-12" db="EMBL/GenBank/DDBJ databases">
        <title>Complete sequence of Shewanella sp. W3-18-1.</title>
        <authorList>
            <consortium name="US DOE Joint Genome Institute"/>
            <person name="Copeland A."/>
            <person name="Lucas S."/>
            <person name="Lapidus A."/>
            <person name="Barry K."/>
            <person name="Detter J.C."/>
            <person name="Glavina del Rio T."/>
            <person name="Hammon N."/>
            <person name="Israni S."/>
            <person name="Dalin E."/>
            <person name="Tice H."/>
            <person name="Pitluck S."/>
            <person name="Chain P."/>
            <person name="Malfatti S."/>
            <person name="Shin M."/>
            <person name="Vergez L."/>
            <person name="Schmutz J."/>
            <person name="Larimer F."/>
            <person name="Land M."/>
            <person name="Hauser L."/>
            <person name="Kyrpides N."/>
            <person name="Lykidis A."/>
            <person name="Tiedje J."/>
            <person name="Richardson P."/>
        </authorList>
    </citation>
    <scope>NUCLEOTIDE SEQUENCE [LARGE SCALE GENOMIC DNA]</scope>
    <source>
        <strain>W3-18-1</strain>
    </source>
</reference>
<keyword id="KW-0004">4Fe-4S</keyword>
<keyword id="KW-0067">ATP-binding</keyword>
<keyword id="KW-0963">Cytoplasm</keyword>
<keyword id="KW-0408">Iron</keyword>
<keyword id="KW-0411">Iron-sulfur</keyword>
<keyword id="KW-0460">Magnesium</keyword>
<keyword id="KW-0479">Metal-binding</keyword>
<keyword id="KW-0547">Nucleotide-binding</keyword>
<keyword id="KW-0694">RNA-binding</keyword>
<keyword id="KW-0808">Transferase</keyword>
<keyword id="KW-0819">tRNA processing</keyword>
<keyword id="KW-0820">tRNA-binding</keyword>
<sequence>MSEELSKKHTTRLNKLQKRLRREVGSAIADYNMIEDGDRVMCCLSGGKDSYAMLDILMNLQQRAPIQFEIIAVNLDQKQPGFPEDILPAYLDKLKVPYHILEKDTYSIVKDKIPEGKTTCSLCSRLRRGTLYGFAQRIGATKIALGHHRDDIIETLFLNMFFGGKMKAMPPKLLSDDGANIVIRPLAYCREKDLEEYAQLKQFPIIPCNLCGSQENLKRAAVKDMLNQWDRQYPGRIETIFTAMQNTAPSQGVDREQFDFISLKRDPDVPMTGDVAEADLPAFDFLDIANSGHIDLDAAQRIDVVSFYEA</sequence>
<gene>
    <name evidence="1" type="primary">ttcA</name>
    <name type="ordered locus">Sputw3181_2056</name>
</gene>
<accession>A1RJP0</accession>
<comment type="function">
    <text evidence="1">Catalyzes the ATP-dependent 2-thiolation of cytidine in position 32 of tRNA, to form 2-thiocytidine (s(2)C32). The sulfur atoms are provided by the cysteine/cysteine desulfurase (IscS) system.</text>
</comment>
<comment type="catalytic activity">
    <reaction evidence="1">
        <text>cytidine(32) in tRNA + S-sulfanyl-L-cysteinyl-[cysteine desulfurase] + AH2 + ATP = 2-thiocytidine(32) in tRNA + L-cysteinyl-[cysteine desulfurase] + A + AMP + diphosphate + H(+)</text>
        <dbReference type="Rhea" id="RHEA:57048"/>
        <dbReference type="Rhea" id="RHEA-COMP:10288"/>
        <dbReference type="Rhea" id="RHEA-COMP:12157"/>
        <dbReference type="Rhea" id="RHEA-COMP:12158"/>
        <dbReference type="Rhea" id="RHEA-COMP:14821"/>
        <dbReference type="ChEBI" id="CHEBI:13193"/>
        <dbReference type="ChEBI" id="CHEBI:15378"/>
        <dbReference type="ChEBI" id="CHEBI:17499"/>
        <dbReference type="ChEBI" id="CHEBI:29950"/>
        <dbReference type="ChEBI" id="CHEBI:30616"/>
        <dbReference type="ChEBI" id="CHEBI:33019"/>
        <dbReference type="ChEBI" id="CHEBI:61963"/>
        <dbReference type="ChEBI" id="CHEBI:82748"/>
        <dbReference type="ChEBI" id="CHEBI:141453"/>
        <dbReference type="ChEBI" id="CHEBI:456215"/>
    </reaction>
    <physiologicalReaction direction="left-to-right" evidence="1">
        <dbReference type="Rhea" id="RHEA:57049"/>
    </physiologicalReaction>
</comment>
<comment type="cofactor">
    <cofactor evidence="1">
        <name>Mg(2+)</name>
        <dbReference type="ChEBI" id="CHEBI:18420"/>
    </cofactor>
</comment>
<comment type="cofactor">
    <cofactor evidence="1">
        <name>[4Fe-4S] cluster</name>
        <dbReference type="ChEBI" id="CHEBI:49883"/>
    </cofactor>
    <text evidence="1">Binds 1 [4Fe-4S] cluster per subunit. The cluster is chelated by three Cys residues, the fourth Fe has a free coordination site that may bind a sulfur atom transferred from the persulfide of IscS.</text>
</comment>
<comment type="pathway">
    <text evidence="1">tRNA modification.</text>
</comment>
<comment type="subunit">
    <text evidence="1">Homodimer.</text>
</comment>
<comment type="subcellular location">
    <subcellularLocation>
        <location evidence="1">Cytoplasm</location>
    </subcellularLocation>
</comment>
<comment type="miscellaneous">
    <text evidence="1">The thiolation reaction likely consists of two steps: a first activation step by ATP to form an adenylated intermediate of the target base of tRNA, and a second nucleophilic substitution step of the sulfur (S) atom supplied by the hydrosulfide attached to the Fe-S cluster.</text>
</comment>
<comment type="similarity">
    <text evidence="1">Belongs to the TtcA family.</text>
</comment>
<name>TTCA_SHESW</name>
<organism>
    <name type="scientific">Shewanella sp. (strain W3-18-1)</name>
    <dbReference type="NCBI Taxonomy" id="351745"/>
    <lineage>
        <taxon>Bacteria</taxon>
        <taxon>Pseudomonadati</taxon>
        <taxon>Pseudomonadota</taxon>
        <taxon>Gammaproteobacteria</taxon>
        <taxon>Alteromonadales</taxon>
        <taxon>Shewanellaceae</taxon>
        <taxon>Shewanella</taxon>
    </lineage>
</organism>
<dbReference type="EC" id="2.8.1.-" evidence="1"/>
<dbReference type="EMBL" id="CP000503">
    <property type="protein sequence ID" value="ABM24885.1"/>
    <property type="molecule type" value="Genomic_DNA"/>
</dbReference>
<dbReference type="SMR" id="A1RJP0"/>
<dbReference type="KEGG" id="shw:Sputw3181_2056"/>
<dbReference type="HOGENOM" id="CLU_026481_0_0_6"/>
<dbReference type="Proteomes" id="UP000002597">
    <property type="component" value="Chromosome"/>
</dbReference>
<dbReference type="GO" id="GO:0005737">
    <property type="term" value="C:cytoplasm"/>
    <property type="evidence" value="ECO:0007669"/>
    <property type="project" value="UniProtKB-SubCell"/>
</dbReference>
<dbReference type="GO" id="GO:0051539">
    <property type="term" value="F:4 iron, 4 sulfur cluster binding"/>
    <property type="evidence" value="ECO:0007669"/>
    <property type="project" value="UniProtKB-UniRule"/>
</dbReference>
<dbReference type="GO" id="GO:0005524">
    <property type="term" value="F:ATP binding"/>
    <property type="evidence" value="ECO:0007669"/>
    <property type="project" value="UniProtKB-UniRule"/>
</dbReference>
<dbReference type="GO" id="GO:0000287">
    <property type="term" value="F:magnesium ion binding"/>
    <property type="evidence" value="ECO:0007669"/>
    <property type="project" value="UniProtKB-UniRule"/>
</dbReference>
<dbReference type="GO" id="GO:0016783">
    <property type="term" value="F:sulfurtransferase activity"/>
    <property type="evidence" value="ECO:0007669"/>
    <property type="project" value="UniProtKB-UniRule"/>
</dbReference>
<dbReference type="GO" id="GO:0000049">
    <property type="term" value="F:tRNA binding"/>
    <property type="evidence" value="ECO:0007669"/>
    <property type="project" value="UniProtKB-KW"/>
</dbReference>
<dbReference type="GO" id="GO:0034227">
    <property type="term" value="P:tRNA thio-modification"/>
    <property type="evidence" value="ECO:0007669"/>
    <property type="project" value="UniProtKB-UniRule"/>
</dbReference>
<dbReference type="CDD" id="cd24138">
    <property type="entry name" value="TtcA-like"/>
    <property type="match status" value="1"/>
</dbReference>
<dbReference type="Gene3D" id="3.40.50.620">
    <property type="entry name" value="HUPs"/>
    <property type="match status" value="1"/>
</dbReference>
<dbReference type="HAMAP" id="MF_01850">
    <property type="entry name" value="TtcA"/>
    <property type="match status" value="1"/>
</dbReference>
<dbReference type="InterPro" id="IPR014729">
    <property type="entry name" value="Rossmann-like_a/b/a_fold"/>
</dbReference>
<dbReference type="InterPro" id="IPR011063">
    <property type="entry name" value="TilS/TtcA_N"/>
</dbReference>
<dbReference type="InterPro" id="IPR012089">
    <property type="entry name" value="tRNA_Cyd_32_2_STrfase"/>
</dbReference>
<dbReference type="InterPro" id="IPR035107">
    <property type="entry name" value="tRNA_thiolation_TtcA_Ctu1"/>
</dbReference>
<dbReference type="NCBIfam" id="NF007972">
    <property type="entry name" value="PRK10696.1"/>
    <property type="match status" value="1"/>
</dbReference>
<dbReference type="PANTHER" id="PTHR43686:SF1">
    <property type="entry name" value="AMINOTRAN_5 DOMAIN-CONTAINING PROTEIN"/>
    <property type="match status" value="1"/>
</dbReference>
<dbReference type="PANTHER" id="PTHR43686">
    <property type="entry name" value="SULFURTRANSFERASE-RELATED"/>
    <property type="match status" value="1"/>
</dbReference>
<dbReference type="Pfam" id="PF01171">
    <property type="entry name" value="ATP_bind_3"/>
    <property type="match status" value="1"/>
</dbReference>
<dbReference type="PIRSF" id="PIRSF004976">
    <property type="entry name" value="ATPase_YdaO"/>
    <property type="match status" value="1"/>
</dbReference>
<dbReference type="SUPFAM" id="SSF52402">
    <property type="entry name" value="Adenine nucleotide alpha hydrolases-like"/>
    <property type="match status" value="1"/>
</dbReference>
<feature type="chain" id="PRO_0000348846" description="tRNA-cytidine(32) 2-sulfurtransferase">
    <location>
        <begin position="1"/>
        <end position="310"/>
    </location>
</feature>
<feature type="short sequence motif" description="PP-loop motif" evidence="1">
    <location>
        <begin position="45"/>
        <end position="50"/>
    </location>
</feature>
<feature type="binding site" evidence="1">
    <location>
        <position position="120"/>
    </location>
    <ligand>
        <name>[4Fe-4S] cluster</name>
        <dbReference type="ChEBI" id="CHEBI:49883"/>
    </ligand>
</feature>
<feature type="binding site" evidence="1">
    <location>
        <position position="123"/>
    </location>
    <ligand>
        <name>[4Fe-4S] cluster</name>
        <dbReference type="ChEBI" id="CHEBI:49883"/>
    </ligand>
</feature>
<feature type="binding site" evidence="1">
    <location>
        <position position="211"/>
    </location>
    <ligand>
        <name>[4Fe-4S] cluster</name>
        <dbReference type="ChEBI" id="CHEBI:49883"/>
    </ligand>
</feature>
<proteinExistence type="inferred from homology"/>
<protein>
    <recommendedName>
        <fullName evidence="1">tRNA-cytidine(32) 2-sulfurtransferase</fullName>
        <ecNumber evidence="1">2.8.1.-</ecNumber>
    </recommendedName>
    <alternativeName>
        <fullName evidence="1">Two-thiocytidine biosynthesis protein A</fullName>
    </alternativeName>
    <alternativeName>
        <fullName evidence="1">tRNA 2-thiocytidine biosynthesis protein TtcA</fullName>
    </alternativeName>
</protein>
<evidence type="ECO:0000255" key="1">
    <source>
        <dbReference type="HAMAP-Rule" id="MF_01850"/>
    </source>
</evidence>